<organism>
    <name type="scientific">Homo sapiens</name>
    <name type="common">Human</name>
    <dbReference type="NCBI Taxonomy" id="9606"/>
    <lineage>
        <taxon>Eukaryota</taxon>
        <taxon>Metazoa</taxon>
        <taxon>Chordata</taxon>
        <taxon>Craniata</taxon>
        <taxon>Vertebrata</taxon>
        <taxon>Euteleostomi</taxon>
        <taxon>Mammalia</taxon>
        <taxon>Eutheria</taxon>
        <taxon>Euarchontoglires</taxon>
        <taxon>Primates</taxon>
        <taxon>Haplorrhini</taxon>
        <taxon>Catarrhini</taxon>
        <taxon>Hominidae</taxon>
        <taxon>Homo</taxon>
    </lineage>
</organism>
<name>SPF30_HUMAN</name>
<reference key="1">
    <citation type="journal article" date="1998" name="Nat. Genet.">
        <title>Mass spectrometry and EST-database searching allows characterization of the multi-protein spliceosome complex.</title>
        <authorList>
            <person name="Neubauer G."/>
            <person name="King A."/>
            <person name="Rappsilber J."/>
            <person name="Calvio C."/>
            <person name="Watson M."/>
            <person name="Ajuh P."/>
            <person name="Sleeman J."/>
            <person name="Lamond A.I."/>
            <person name="Mann M."/>
        </authorList>
    </citation>
    <scope>NUCLEOTIDE SEQUENCE [MRNA]</scope>
    <scope>PARTIAL PROTEIN SEQUENCE</scope>
    <scope>IDENTIFICATION BY MASS SPECTROMETRY</scope>
    <scope>INTERACTION WITH THE SPLICEOSOME</scope>
</reference>
<reference key="2">
    <citation type="submission" date="1998-11" db="EMBL/GenBank/DDBJ databases">
        <title>Isolating and cloning HSP cDNA.</title>
        <authorList>
            <person name="Chen J.H."/>
            <person name="Luo W.Q."/>
            <person name="Zhou Y."/>
            <person name="Huang X.W."/>
            <person name="Yuan J.G."/>
            <person name="Qiang B.Q."/>
        </authorList>
    </citation>
    <scope>NUCLEOTIDE SEQUENCE [MRNA]</scope>
</reference>
<reference key="3">
    <citation type="journal article" date="2004" name="Nat. Genet.">
        <title>Complete sequencing and characterization of 21,243 full-length human cDNAs.</title>
        <authorList>
            <person name="Ota T."/>
            <person name="Suzuki Y."/>
            <person name="Nishikawa T."/>
            <person name="Otsuki T."/>
            <person name="Sugiyama T."/>
            <person name="Irie R."/>
            <person name="Wakamatsu A."/>
            <person name="Hayashi K."/>
            <person name="Sato H."/>
            <person name="Nagai K."/>
            <person name="Kimura K."/>
            <person name="Makita H."/>
            <person name="Sekine M."/>
            <person name="Obayashi M."/>
            <person name="Nishi T."/>
            <person name="Shibahara T."/>
            <person name="Tanaka T."/>
            <person name="Ishii S."/>
            <person name="Yamamoto J."/>
            <person name="Saito K."/>
            <person name="Kawai Y."/>
            <person name="Isono Y."/>
            <person name="Nakamura Y."/>
            <person name="Nagahari K."/>
            <person name="Murakami K."/>
            <person name="Yasuda T."/>
            <person name="Iwayanagi T."/>
            <person name="Wagatsuma M."/>
            <person name="Shiratori A."/>
            <person name="Sudo H."/>
            <person name="Hosoiri T."/>
            <person name="Kaku Y."/>
            <person name="Kodaira H."/>
            <person name="Kondo H."/>
            <person name="Sugawara M."/>
            <person name="Takahashi M."/>
            <person name="Kanda K."/>
            <person name="Yokoi T."/>
            <person name="Furuya T."/>
            <person name="Kikkawa E."/>
            <person name="Omura Y."/>
            <person name="Abe K."/>
            <person name="Kamihara K."/>
            <person name="Katsuta N."/>
            <person name="Sato K."/>
            <person name="Tanikawa M."/>
            <person name="Yamazaki M."/>
            <person name="Ninomiya K."/>
            <person name="Ishibashi T."/>
            <person name="Yamashita H."/>
            <person name="Murakawa K."/>
            <person name="Fujimori K."/>
            <person name="Tanai H."/>
            <person name="Kimata M."/>
            <person name="Watanabe M."/>
            <person name="Hiraoka S."/>
            <person name="Chiba Y."/>
            <person name="Ishida S."/>
            <person name="Ono Y."/>
            <person name="Takiguchi S."/>
            <person name="Watanabe S."/>
            <person name="Yosida M."/>
            <person name="Hotuta T."/>
            <person name="Kusano J."/>
            <person name="Kanehori K."/>
            <person name="Takahashi-Fujii A."/>
            <person name="Hara H."/>
            <person name="Tanase T.-O."/>
            <person name="Nomura Y."/>
            <person name="Togiya S."/>
            <person name="Komai F."/>
            <person name="Hara R."/>
            <person name="Takeuchi K."/>
            <person name="Arita M."/>
            <person name="Imose N."/>
            <person name="Musashino K."/>
            <person name="Yuuki H."/>
            <person name="Oshima A."/>
            <person name="Sasaki N."/>
            <person name="Aotsuka S."/>
            <person name="Yoshikawa Y."/>
            <person name="Matsunawa H."/>
            <person name="Ichihara T."/>
            <person name="Shiohata N."/>
            <person name="Sano S."/>
            <person name="Moriya S."/>
            <person name="Momiyama H."/>
            <person name="Satoh N."/>
            <person name="Takami S."/>
            <person name="Terashima Y."/>
            <person name="Suzuki O."/>
            <person name="Nakagawa S."/>
            <person name="Senoh A."/>
            <person name="Mizoguchi H."/>
            <person name="Goto Y."/>
            <person name="Shimizu F."/>
            <person name="Wakebe H."/>
            <person name="Hishigaki H."/>
            <person name="Watanabe T."/>
            <person name="Sugiyama A."/>
            <person name="Takemoto M."/>
            <person name="Kawakami B."/>
            <person name="Yamazaki M."/>
            <person name="Watanabe K."/>
            <person name="Kumagai A."/>
            <person name="Itakura S."/>
            <person name="Fukuzumi Y."/>
            <person name="Fujimori Y."/>
            <person name="Komiyama M."/>
            <person name="Tashiro H."/>
            <person name="Tanigami A."/>
            <person name="Fujiwara T."/>
            <person name="Ono T."/>
            <person name="Yamada K."/>
            <person name="Fujii Y."/>
            <person name="Ozaki K."/>
            <person name="Hirao M."/>
            <person name="Ohmori Y."/>
            <person name="Kawabata A."/>
            <person name="Hikiji T."/>
            <person name="Kobatake N."/>
            <person name="Inagaki H."/>
            <person name="Ikema Y."/>
            <person name="Okamoto S."/>
            <person name="Okitani R."/>
            <person name="Kawakami T."/>
            <person name="Noguchi S."/>
            <person name="Itoh T."/>
            <person name="Shigeta K."/>
            <person name="Senba T."/>
            <person name="Matsumura K."/>
            <person name="Nakajima Y."/>
            <person name="Mizuno T."/>
            <person name="Morinaga M."/>
            <person name="Sasaki M."/>
            <person name="Togashi T."/>
            <person name="Oyama M."/>
            <person name="Hata H."/>
            <person name="Watanabe M."/>
            <person name="Komatsu T."/>
            <person name="Mizushima-Sugano J."/>
            <person name="Satoh T."/>
            <person name="Shirai Y."/>
            <person name="Takahashi Y."/>
            <person name="Nakagawa K."/>
            <person name="Okumura K."/>
            <person name="Nagase T."/>
            <person name="Nomura N."/>
            <person name="Kikuchi H."/>
            <person name="Masuho Y."/>
            <person name="Yamashita R."/>
            <person name="Nakai K."/>
            <person name="Yada T."/>
            <person name="Nakamura Y."/>
            <person name="Ohara O."/>
            <person name="Isogai T."/>
            <person name="Sugano S."/>
        </authorList>
    </citation>
    <scope>NUCLEOTIDE SEQUENCE [LARGE SCALE MRNA]</scope>
    <source>
        <tissue>Testis</tissue>
    </source>
</reference>
<reference key="4">
    <citation type="journal article" date="2004" name="Nature">
        <title>The DNA sequence and comparative analysis of human chromosome 10.</title>
        <authorList>
            <person name="Deloukas P."/>
            <person name="Earthrowl M.E."/>
            <person name="Grafham D.V."/>
            <person name="Rubenfield M."/>
            <person name="French L."/>
            <person name="Steward C.A."/>
            <person name="Sims S.K."/>
            <person name="Jones M.C."/>
            <person name="Searle S."/>
            <person name="Scott C."/>
            <person name="Howe K."/>
            <person name="Hunt S.E."/>
            <person name="Andrews T.D."/>
            <person name="Gilbert J.G.R."/>
            <person name="Swarbreck D."/>
            <person name="Ashurst J.L."/>
            <person name="Taylor A."/>
            <person name="Battles J."/>
            <person name="Bird C.P."/>
            <person name="Ainscough R."/>
            <person name="Almeida J.P."/>
            <person name="Ashwell R.I.S."/>
            <person name="Ambrose K.D."/>
            <person name="Babbage A.K."/>
            <person name="Bagguley C.L."/>
            <person name="Bailey J."/>
            <person name="Banerjee R."/>
            <person name="Bates K."/>
            <person name="Beasley H."/>
            <person name="Bray-Allen S."/>
            <person name="Brown A.J."/>
            <person name="Brown J.Y."/>
            <person name="Burford D.C."/>
            <person name="Burrill W."/>
            <person name="Burton J."/>
            <person name="Cahill P."/>
            <person name="Camire D."/>
            <person name="Carter N.P."/>
            <person name="Chapman J.C."/>
            <person name="Clark S.Y."/>
            <person name="Clarke G."/>
            <person name="Clee C.M."/>
            <person name="Clegg S."/>
            <person name="Corby N."/>
            <person name="Coulson A."/>
            <person name="Dhami P."/>
            <person name="Dutta I."/>
            <person name="Dunn M."/>
            <person name="Faulkner L."/>
            <person name="Frankish A."/>
            <person name="Frankland J.A."/>
            <person name="Garner P."/>
            <person name="Garnett J."/>
            <person name="Gribble S."/>
            <person name="Griffiths C."/>
            <person name="Grocock R."/>
            <person name="Gustafson E."/>
            <person name="Hammond S."/>
            <person name="Harley J.L."/>
            <person name="Hart E."/>
            <person name="Heath P.D."/>
            <person name="Ho T.P."/>
            <person name="Hopkins B."/>
            <person name="Horne J."/>
            <person name="Howden P.J."/>
            <person name="Huckle E."/>
            <person name="Hynds C."/>
            <person name="Johnson C."/>
            <person name="Johnson D."/>
            <person name="Kana A."/>
            <person name="Kay M."/>
            <person name="Kimberley A.M."/>
            <person name="Kershaw J.K."/>
            <person name="Kokkinaki M."/>
            <person name="Laird G.K."/>
            <person name="Lawlor S."/>
            <person name="Lee H.M."/>
            <person name="Leongamornlert D.A."/>
            <person name="Laird G."/>
            <person name="Lloyd C."/>
            <person name="Lloyd D.M."/>
            <person name="Loveland J."/>
            <person name="Lovell J."/>
            <person name="McLaren S."/>
            <person name="McLay K.E."/>
            <person name="McMurray A."/>
            <person name="Mashreghi-Mohammadi M."/>
            <person name="Matthews L."/>
            <person name="Milne S."/>
            <person name="Nickerson T."/>
            <person name="Nguyen M."/>
            <person name="Overton-Larty E."/>
            <person name="Palmer S.A."/>
            <person name="Pearce A.V."/>
            <person name="Peck A.I."/>
            <person name="Pelan S."/>
            <person name="Phillimore B."/>
            <person name="Porter K."/>
            <person name="Rice C.M."/>
            <person name="Rogosin A."/>
            <person name="Ross M.T."/>
            <person name="Sarafidou T."/>
            <person name="Sehra H.K."/>
            <person name="Shownkeen R."/>
            <person name="Skuce C.D."/>
            <person name="Smith M."/>
            <person name="Standring L."/>
            <person name="Sycamore N."/>
            <person name="Tester J."/>
            <person name="Thorpe A."/>
            <person name="Torcasso W."/>
            <person name="Tracey A."/>
            <person name="Tromans A."/>
            <person name="Tsolas J."/>
            <person name="Wall M."/>
            <person name="Walsh J."/>
            <person name="Wang H."/>
            <person name="Weinstock K."/>
            <person name="West A.P."/>
            <person name="Willey D.L."/>
            <person name="Whitehead S.L."/>
            <person name="Wilming L."/>
            <person name="Wray P.W."/>
            <person name="Young L."/>
            <person name="Chen Y."/>
            <person name="Lovering R.C."/>
            <person name="Moschonas N.K."/>
            <person name="Siebert R."/>
            <person name="Fechtel K."/>
            <person name="Bentley D."/>
            <person name="Durbin R.M."/>
            <person name="Hubbard T."/>
            <person name="Doucette-Stamm L."/>
            <person name="Beck S."/>
            <person name="Smith D.R."/>
            <person name="Rogers J."/>
        </authorList>
    </citation>
    <scope>NUCLEOTIDE SEQUENCE [LARGE SCALE GENOMIC DNA]</scope>
</reference>
<reference key="5">
    <citation type="submission" date="2005-09" db="EMBL/GenBank/DDBJ databases">
        <authorList>
            <person name="Mural R.J."/>
            <person name="Istrail S."/>
            <person name="Sutton G.G."/>
            <person name="Florea L."/>
            <person name="Halpern A.L."/>
            <person name="Mobarry C.M."/>
            <person name="Lippert R."/>
            <person name="Walenz B."/>
            <person name="Shatkay H."/>
            <person name="Dew I."/>
            <person name="Miller J.R."/>
            <person name="Flanigan M.J."/>
            <person name="Edwards N.J."/>
            <person name="Bolanos R."/>
            <person name="Fasulo D."/>
            <person name="Halldorsson B.V."/>
            <person name="Hannenhalli S."/>
            <person name="Turner R."/>
            <person name="Yooseph S."/>
            <person name="Lu F."/>
            <person name="Nusskern D.R."/>
            <person name="Shue B.C."/>
            <person name="Zheng X.H."/>
            <person name="Zhong F."/>
            <person name="Delcher A.L."/>
            <person name="Huson D.H."/>
            <person name="Kravitz S.A."/>
            <person name="Mouchard L."/>
            <person name="Reinert K."/>
            <person name="Remington K.A."/>
            <person name="Clark A.G."/>
            <person name="Waterman M.S."/>
            <person name="Eichler E.E."/>
            <person name="Adams M.D."/>
            <person name="Hunkapiller M.W."/>
            <person name="Myers E.W."/>
            <person name="Venter J.C."/>
        </authorList>
    </citation>
    <scope>NUCLEOTIDE SEQUENCE [LARGE SCALE GENOMIC DNA]</scope>
</reference>
<reference key="6">
    <citation type="journal article" date="2004" name="Genome Res.">
        <title>The status, quality, and expansion of the NIH full-length cDNA project: the Mammalian Gene Collection (MGC).</title>
        <authorList>
            <consortium name="The MGC Project Team"/>
        </authorList>
    </citation>
    <scope>NUCLEOTIDE SEQUENCE [LARGE SCALE MRNA]</scope>
    <source>
        <tissue>Brain</tissue>
    </source>
</reference>
<reference key="7">
    <citation type="journal article" date="1998" name="Hum. Mol. Genet.">
        <title>Characterization of a gene encoding survival motor neuron (SMN)-related protein, a constituent of the spliceosome complex.</title>
        <authorList>
            <person name="Talbot K."/>
            <person name="Miguel-Aliaga I."/>
            <person name="Mohaghegh P."/>
            <person name="Ponting C.P."/>
            <person name="Davies K.E."/>
        </authorList>
    </citation>
    <scope>FUNCTION</scope>
    <scope>TISSUE SPECIFICITY</scope>
    <scope>SUBCELLULAR LOCATION</scope>
</reference>
<reference key="8">
    <citation type="journal article" date="2001" name="EMBO J.">
        <title>SMNrp is an essential pre-mRNA splicing factor required for the formation of the mature spliceosome.</title>
        <authorList>
            <person name="Meister G."/>
            <person name="Hannus S."/>
            <person name="Ploettner O."/>
            <person name="Baars T."/>
            <person name="Hartmann E."/>
            <person name="Fakan S."/>
            <person name="Laggerbauer B."/>
            <person name="Fischer U."/>
        </authorList>
    </citation>
    <scope>FUNCTION</scope>
    <scope>INTERACTION WITH THE SPLICEOSOME; U2 SNRNP AND U4/U5/U6 TRI-SNRNP</scope>
</reference>
<reference key="9">
    <citation type="journal article" date="2001" name="J. Biol. Chem.">
        <title>SPF30 is an essential human splicing factor required for assembly of the U4/U5/U6 tri-small nuclear ribonucleoprotein into the spliceosome.</title>
        <authorList>
            <person name="Rappsilber J."/>
            <person name="Ajuh P."/>
            <person name="Lamond A.I."/>
            <person name="Mann M."/>
        </authorList>
    </citation>
    <scope>FUNCTION</scope>
    <scope>SUBCELLULAR LOCATION</scope>
    <scope>INTERACTION WITH THE SPLICEOSOME; WITH U2 SNRNP AND WITH U4/U5/U6 TRI-SNRNP</scope>
</reference>
<reference key="10">
    <citation type="journal article" date="2006" name="Nat. Biotechnol.">
        <title>A probability-based approach for high-throughput protein phosphorylation analysis and site localization.</title>
        <authorList>
            <person name="Beausoleil S.A."/>
            <person name="Villen J."/>
            <person name="Gerber S.A."/>
            <person name="Rush J."/>
            <person name="Gygi S.P."/>
        </authorList>
    </citation>
    <scope>PHOSPHORYLATION [LARGE SCALE ANALYSIS] AT SER-201</scope>
    <scope>IDENTIFICATION BY MASS SPECTROMETRY [LARGE SCALE ANALYSIS]</scope>
    <source>
        <tissue>Cervix carcinoma</tissue>
    </source>
</reference>
<reference key="11">
    <citation type="journal article" date="2008" name="Proc. Natl. Acad. Sci. U.S.A.">
        <title>A quantitative atlas of mitotic phosphorylation.</title>
        <authorList>
            <person name="Dephoure N."/>
            <person name="Zhou C."/>
            <person name="Villen J."/>
            <person name="Beausoleil S.A."/>
            <person name="Bakalarski C.E."/>
            <person name="Elledge S.J."/>
            <person name="Gygi S.P."/>
        </authorList>
    </citation>
    <scope>PHOSPHORYLATION [LARGE SCALE ANALYSIS] AT SER-201</scope>
    <scope>IDENTIFICATION BY MASS SPECTROMETRY [LARGE SCALE ANALYSIS]</scope>
    <source>
        <tissue>Cervix carcinoma</tissue>
    </source>
</reference>
<reference key="12">
    <citation type="journal article" date="2009" name="Sci. Signal.">
        <title>Quantitative phosphoproteomic analysis of T cell receptor signaling reveals system-wide modulation of protein-protein interactions.</title>
        <authorList>
            <person name="Mayya V."/>
            <person name="Lundgren D.H."/>
            <person name="Hwang S.-I."/>
            <person name="Rezaul K."/>
            <person name="Wu L."/>
            <person name="Eng J.K."/>
            <person name="Rodionov V."/>
            <person name="Han D.K."/>
        </authorList>
    </citation>
    <scope>PHOSPHORYLATION [LARGE SCALE ANALYSIS] AT SER-201</scope>
    <scope>IDENTIFICATION BY MASS SPECTROMETRY [LARGE SCALE ANALYSIS]</scope>
    <source>
        <tissue>Leukemic T-cell</tissue>
    </source>
</reference>
<reference key="13">
    <citation type="journal article" date="2009" name="Science">
        <title>Lysine acetylation targets protein complexes and co-regulates major cellular functions.</title>
        <authorList>
            <person name="Choudhary C."/>
            <person name="Kumar C."/>
            <person name="Gnad F."/>
            <person name="Nielsen M.L."/>
            <person name="Rehman M."/>
            <person name="Walther T.C."/>
            <person name="Olsen J.V."/>
            <person name="Mann M."/>
        </authorList>
    </citation>
    <scope>ACETYLATION [LARGE SCALE ANALYSIS] AT LYS-219</scope>
    <scope>IDENTIFICATION BY MASS SPECTROMETRY [LARGE SCALE ANALYSIS]</scope>
</reference>
<reference key="14">
    <citation type="journal article" date="2010" name="Sci. Signal.">
        <title>Quantitative phosphoproteomics reveals widespread full phosphorylation site occupancy during mitosis.</title>
        <authorList>
            <person name="Olsen J.V."/>
            <person name="Vermeulen M."/>
            <person name="Santamaria A."/>
            <person name="Kumar C."/>
            <person name="Miller M.L."/>
            <person name="Jensen L.J."/>
            <person name="Gnad F."/>
            <person name="Cox J."/>
            <person name="Jensen T.S."/>
            <person name="Nigg E.A."/>
            <person name="Brunak S."/>
            <person name="Mann M."/>
        </authorList>
    </citation>
    <scope>PHOSPHORYLATION [LARGE SCALE ANALYSIS] AT SER-201</scope>
    <scope>IDENTIFICATION BY MASS SPECTROMETRY [LARGE SCALE ANALYSIS]</scope>
    <source>
        <tissue>Cervix carcinoma</tissue>
    </source>
</reference>
<reference key="15">
    <citation type="journal article" date="2011" name="BMC Syst. Biol.">
        <title>Initial characterization of the human central proteome.</title>
        <authorList>
            <person name="Burkard T.R."/>
            <person name="Planyavsky M."/>
            <person name="Kaupe I."/>
            <person name="Breitwieser F.P."/>
            <person name="Buerckstuemmer T."/>
            <person name="Bennett K.L."/>
            <person name="Superti-Furga G."/>
            <person name="Colinge J."/>
        </authorList>
    </citation>
    <scope>IDENTIFICATION BY MASS SPECTROMETRY [LARGE SCALE ANALYSIS]</scope>
</reference>
<reference key="16">
    <citation type="journal article" date="2013" name="J. Proteome Res.">
        <title>Toward a comprehensive characterization of a human cancer cell phosphoproteome.</title>
        <authorList>
            <person name="Zhou H."/>
            <person name="Di Palma S."/>
            <person name="Preisinger C."/>
            <person name="Peng M."/>
            <person name="Polat A.N."/>
            <person name="Heck A.J."/>
            <person name="Mohammed S."/>
        </authorList>
    </citation>
    <scope>PHOSPHORYLATION [LARGE SCALE ANALYSIS] AT SER-201</scope>
    <scope>IDENTIFICATION BY MASS SPECTROMETRY [LARGE SCALE ANALYSIS]</scope>
    <source>
        <tissue>Cervix carcinoma</tissue>
        <tissue>Erythroleukemia</tissue>
    </source>
</reference>
<reference evidence="8 9" key="17">
    <citation type="journal article" date="2011" name="Nat. Struct. Mol. Biol.">
        <title>Structural basis for dimethylarginine recognition by the Tudor domains of human SMN and SPF30 proteins.</title>
        <authorList>
            <person name="Tripsianes K."/>
            <person name="Madl T."/>
            <person name="Machyna M."/>
            <person name="Fessas D."/>
            <person name="Englbrecht C."/>
            <person name="Fischer U."/>
            <person name="Neugebauer K.M."/>
            <person name="Sattler M."/>
        </authorList>
    </citation>
    <scope>STRUCTURE BY NMR OF 65-128 IN COMPLEX WITH DIMETHYLATED ARGININE</scope>
    <scope>DOMAIN TUDOR</scope>
    <scope>INTERACTION WITH SNRPD3</scope>
    <scope>MUTAGENESIS OF 108-PHE--THR-117</scope>
</reference>
<evidence type="ECO:0000255" key="1"/>
<evidence type="ECO:0000255" key="2">
    <source>
        <dbReference type="PROSITE-ProRule" id="PRU00211"/>
    </source>
</evidence>
<evidence type="ECO:0000269" key="3">
    <source>
    </source>
</evidence>
<evidence type="ECO:0000269" key="4">
    <source>
    </source>
</evidence>
<evidence type="ECO:0000269" key="5">
    <source>
    </source>
</evidence>
<evidence type="ECO:0000269" key="6">
    <source>
    </source>
</evidence>
<evidence type="ECO:0000305" key="7"/>
<evidence type="ECO:0007744" key="8">
    <source>
        <dbReference type="PDB" id="4A4F"/>
    </source>
</evidence>
<evidence type="ECO:0007744" key="9">
    <source>
        <dbReference type="PDB" id="4A4H"/>
    </source>
</evidence>
<evidence type="ECO:0007744" key="10">
    <source>
    </source>
</evidence>
<evidence type="ECO:0007744" key="11">
    <source>
    </source>
</evidence>
<evidence type="ECO:0007744" key="12">
    <source>
    </source>
</evidence>
<evidence type="ECO:0007744" key="13">
    <source>
    </source>
</evidence>
<evidence type="ECO:0007744" key="14">
    <source>
    </source>
</evidence>
<evidence type="ECO:0007744" key="15">
    <source>
    </source>
</evidence>
<evidence type="ECO:0007829" key="16">
    <source>
        <dbReference type="PDB" id="4A4F"/>
    </source>
</evidence>
<sequence length="238" mass="26711">MSEDLAKQLASYKAQLQQVEAALSGNGENEDLLKLKKDLQEVIELTKDLLSTQPSETLASSDSFASTQPTHSWKVGDKCMAVWSEDGQCYEAEIEEIDEENGTAAITFAGYGNAEVTPLLNLKPVEEGRKAKEDSGNKPMSKKEMIAQQREYKKKKALKKAQRIKELEQEREDQKVKWQQFNNRAYSKNKKGQVKRSIFASPESVTGKVGVGTCGIADKPMTQYQDTSKYNVRHLMPQ</sequence>
<accession>O75940</accession>
<accession>B2RA27</accession>
<accession>D3DRB1</accession>
<accession>Q5T3K6</accession>
<dbReference type="EMBL" id="AF083385">
    <property type="protein sequence ID" value="AAC64086.1"/>
    <property type="molecule type" value="mRNA"/>
</dbReference>
<dbReference type="EMBL" id="AF107463">
    <property type="protein sequence ID" value="AAC84148.1"/>
    <property type="molecule type" value="mRNA"/>
</dbReference>
<dbReference type="EMBL" id="AK314013">
    <property type="protein sequence ID" value="BAG36724.1"/>
    <property type="molecule type" value="mRNA"/>
</dbReference>
<dbReference type="EMBL" id="AL360182">
    <property type="status" value="NOT_ANNOTATED_CDS"/>
    <property type="molecule type" value="Genomic_DNA"/>
</dbReference>
<dbReference type="EMBL" id="CH471066">
    <property type="protein sequence ID" value="EAW49561.1"/>
    <property type="molecule type" value="Genomic_DNA"/>
</dbReference>
<dbReference type="EMBL" id="CH471066">
    <property type="protein sequence ID" value="EAW49562.1"/>
    <property type="molecule type" value="Genomic_DNA"/>
</dbReference>
<dbReference type="EMBL" id="CH471066">
    <property type="protein sequence ID" value="EAW49564.1"/>
    <property type="molecule type" value="Genomic_DNA"/>
</dbReference>
<dbReference type="EMBL" id="BC011234">
    <property type="protein sequence ID" value="AAH11234.1"/>
    <property type="molecule type" value="mRNA"/>
</dbReference>
<dbReference type="CCDS" id="CCDS7565.1"/>
<dbReference type="RefSeq" id="NP_005862.1">
    <property type="nucleotide sequence ID" value="NM_005871.4"/>
</dbReference>
<dbReference type="PDB" id="4A4F">
    <property type="method" value="NMR"/>
    <property type="chains" value="A=65-128"/>
</dbReference>
<dbReference type="PDB" id="4A4H">
    <property type="method" value="NMR"/>
    <property type="chains" value="A=65-128"/>
</dbReference>
<dbReference type="PDB" id="8POI">
    <property type="method" value="NMR"/>
    <property type="chains" value="A=65-128"/>
</dbReference>
<dbReference type="PDBsum" id="4A4F"/>
<dbReference type="PDBsum" id="4A4H"/>
<dbReference type="PDBsum" id="8POI"/>
<dbReference type="BMRB" id="O75940"/>
<dbReference type="SMR" id="O75940"/>
<dbReference type="BioGRID" id="115574">
    <property type="interactions" value="122"/>
</dbReference>
<dbReference type="CORUM" id="O75940"/>
<dbReference type="FunCoup" id="O75940">
    <property type="interactions" value="4520"/>
</dbReference>
<dbReference type="IntAct" id="O75940">
    <property type="interactions" value="724"/>
</dbReference>
<dbReference type="MINT" id="O75940"/>
<dbReference type="STRING" id="9606.ENSP00000358616"/>
<dbReference type="ChEMBL" id="CHEMBL4105959"/>
<dbReference type="GlyGen" id="O75940">
    <property type="glycosylation" value="2 sites, 1 O-linked glycan (2 sites)"/>
</dbReference>
<dbReference type="iPTMnet" id="O75940"/>
<dbReference type="PhosphoSitePlus" id="O75940"/>
<dbReference type="BioMuta" id="SMNDC1"/>
<dbReference type="jPOST" id="O75940"/>
<dbReference type="MassIVE" id="O75940"/>
<dbReference type="PaxDb" id="9606-ENSP00000358616"/>
<dbReference type="PeptideAtlas" id="O75940"/>
<dbReference type="ProteomicsDB" id="50303"/>
<dbReference type="Pumba" id="O75940"/>
<dbReference type="TopDownProteomics" id="O75940"/>
<dbReference type="Antibodypedia" id="31698">
    <property type="antibodies" value="304 antibodies from 29 providers"/>
</dbReference>
<dbReference type="DNASU" id="10285"/>
<dbReference type="Ensembl" id="ENST00000369592.1">
    <property type="protein sequence ID" value="ENSP00000358605.1"/>
    <property type="gene ID" value="ENSG00000119953.14"/>
</dbReference>
<dbReference type="Ensembl" id="ENST00000369603.10">
    <property type="protein sequence ID" value="ENSP00000358616.4"/>
    <property type="gene ID" value="ENSG00000119953.14"/>
</dbReference>
<dbReference type="GeneID" id="10285"/>
<dbReference type="KEGG" id="hsa:10285"/>
<dbReference type="MANE-Select" id="ENST00000369603.10">
    <property type="protein sequence ID" value="ENSP00000358616.4"/>
    <property type="RefSeq nucleotide sequence ID" value="NM_005871.4"/>
    <property type="RefSeq protein sequence ID" value="NP_005862.1"/>
</dbReference>
<dbReference type="UCSC" id="uc001kzc.5">
    <property type="organism name" value="human"/>
</dbReference>
<dbReference type="AGR" id="HGNC:16900"/>
<dbReference type="CTD" id="10285"/>
<dbReference type="DisGeNET" id="10285"/>
<dbReference type="GeneCards" id="SMNDC1"/>
<dbReference type="GeneReviews" id="SMNDC1"/>
<dbReference type="HGNC" id="HGNC:16900">
    <property type="gene designation" value="SMNDC1"/>
</dbReference>
<dbReference type="HPA" id="ENSG00000119953">
    <property type="expression patterns" value="Low tissue specificity"/>
</dbReference>
<dbReference type="MalaCards" id="SMNDC1"/>
<dbReference type="MIM" id="603519">
    <property type="type" value="gene"/>
</dbReference>
<dbReference type="neXtProt" id="NX_O75940"/>
<dbReference type="OpenTargets" id="ENSG00000119953"/>
<dbReference type="PharmGKB" id="PA134990780"/>
<dbReference type="VEuPathDB" id="HostDB:ENSG00000119953"/>
<dbReference type="eggNOG" id="KOG3026">
    <property type="taxonomic scope" value="Eukaryota"/>
</dbReference>
<dbReference type="GeneTree" id="ENSGT00940000153352"/>
<dbReference type="HOGENOM" id="CLU_069491_3_0_1"/>
<dbReference type="InParanoid" id="O75940"/>
<dbReference type="OMA" id="CMAVWSQ"/>
<dbReference type="OrthoDB" id="79171at2759"/>
<dbReference type="PAN-GO" id="O75940">
    <property type="GO annotations" value="1 GO annotation based on evolutionary models"/>
</dbReference>
<dbReference type="PhylomeDB" id="O75940"/>
<dbReference type="TreeFam" id="TF315413"/>
<dbReference type="PathwayCommons" id="O75940"/>
<dbReference type="Reactome" id="R-HSA-72163">
    <property type="pathway name" value="mRNA Splicing - Major Pathway"/>
</dbReference>
<dbReference type="SignaLink" id="O75940"/>
<dbReference type="BioGRID-ORCS" id="10285">
    <property type="hits" value="721 hits in 1174 CRISPR screens"/>
</dbReference>
<dbReference type="CD-CODE" id="91857CE7">
    <property type="entry name" value="Nucleolus"/>
</dbReference>
<dbReference type="ChiTaRS" id="SMNDC1">
    <property type="organism name" value="human"/>
</dbReference>
<dbReference type="EvolutionaryTrace" id="O75940"/>
<dbReference type="GeneWiki" id="Survival_motor_neuron_domain_containing_1"/>
<dbReference type="GenomeRNAi" id="10285"/>
<dbReference type="Pharos" id="O75940">
    <property type="development level" value="Tbio"/>
</dbReference>
<dbReference type="PRO" id="PR:O75940"/>
<dbReference type="Proteomes" id="UP000005640">
    <property type="component" value="Chromosome 10"/>
</dbReference>
<dbReference type="RNAct" id="O75940">
    <property type="molecule type" value="protein"/>
</dbReference>
<dbReference type="Bgee" id="ENSG00000119953">
    <property type="expression patterns" value="Expressed in amniotic fluid and 212 other cell types or tissues"/>
</dbReference>
<dbReference type="ExpressionAtlas" id="O75940">
    <property type="expression patterns" value="baseline and differential"/>
</dbReference>
<dbReference type="GO" id="GO:0015030">
    <property type="term" value="C:Cajal body"/>
    <property type="evidence" value="ECO:0007669"/>
    <property type="project" value="UniProtKB-SubCell"/>
</dbReference>
<dbReference type="GO" id="GO:0005737">
    <property type="term" value="C:cytoplasm"/>
    <property type="evidence" value="ECO:0007669"/>
    <property type="project" value="InterPro"/>
</dbReference>
<dbReference type="GO" id="GO:0016607">
    <property type="term" value="C:nuclear speck"/>
    <property type="evidence" value="ECO:0007669"/>
    <property type="project" value="UniProtKB-SubCell"/>
</dbReference>
<dbReference type="GO" id="GO:0005654">
    <property type="term" value="C:nucleoplasm"/>
    <property type="evidence" value="ECO:0000304"/>
    <property type="project" value="Reactome"/>
</dbReference>
<dbReference type="GO" id="GO:0005634">
    <property type="term" value="C:nucleus"/>
    <property type="evidence" value="ECO:0000318"/>
    <property type="project" value="GO_Central"/>
</dbReference>
<dbReference type="GO" id="GO:0005681">
    <property type="term" value="C:spliceosomal complex"/>
    <property type="evidence" value="ECO:0007669"/>
    <property type="project" value="UniProtKB-KW"/>
</dbReference>
<dbReference type="GO" id="GO:0003723">
    <property type="term" value="F:RNA binding"/>
    <property type="evidence" value="ECO:0007005"/>
    <property type="project" value="UniProtKB"/>
</dbReference>
<dbReference type="GO" id="GO:0006915">
    <property type="term" value="P:apoptotic process"/>
    <property type="evidence" value="ECO:0000304"/>
    <property type="project" value="ProtInc"/>
</dbReference>
<dbReference type="GO" id="GO:0006397">
    <property type="term" value="P:mRNA processing"/>
    <property type="evidence" value="ECO:0007669"/>
    <property type="project" value="UniProtKB-KW"/>
</dbReference>
<dbReference type="GO" id="GO:0000375">
    <property type="term" value="P:RNA splicing, via transesterification reactions"/>
    <property type="evidence" value="ECO:0000304"/>
    <property type="project" value="UniProtKB"/>
</dbReference>
<dbReference type="CDD" id="cd20399">
    <property type="entry name" value="Tudor_SPF30"/>
    <property type="match status" value="1"/>
</dbReference>
<dbReference type="FunFam" id="2.30.30.140:FF:000038">
    <property type="entry name" value="Survival of motor neuron-related-splicing factor 30"/>
    <property type="match status" value="1"/>
</dbReference>
<dbReference type="Gene3D" id="2.30.30.140">
    <property type="match status" value="1"/>
</dbReference>
<dbReference type="InterPro" id="IPR010304">
    <property type="entry name" value="SMN_Tudor"/>
</dbReference>
<dbReference type="InterPro" id="IPR002999">
    <property type="entry name" value="Tudor"/>
</dbReference>
<dbReference type="PANTHER" id="PTHR13681:SF26">
    <property type="entry name" value="SURVIVAL OF MOTOR NEURON-RELATED-SPLICING FACTOR 30"/>
    <property type="match status" value="1"/>
</dbReference>
<dbReference type="PANTHER" id="PTHR13681">
    <property type="entry name" value="SURVIVAL OF MOTOR NEURON-RELATED-SPLICING FACTOR 30-RELATED"/>
    <property type="match status" value="1"/>
</dbReference>
<dbReference type="Pfam" id="PF06003">
    <property type="entry name" value="SMN_Tudor"/>
    <property type="match status" value="1"/>
</dbReference>
<dbReference type="SMART" id="SM00333">
    <property type="entry name" value="TUDOR"/>
    <property type="match status" value="1"/>
</dbReference>
<dbReference type="SUPFAM" id="SSF63748">
    <property type="entry name" value="Tudor/PWWP/MBT"/>
    <property type="match status" value="1"/>
</dbReference>
<dbReference type="PROSITE" id="PS50304">
    <property type="entry name" value="TUDOR"/>
    <property type="match status" value="1"/>
</dbReference>
<gene>
    <name type="primary">SMNDC1</name>
    <name type="synonym">SMNR</name>
    <name type="synonym">SPF30</name>
</gene>
<proteinExistence type="evidence at protein level"/>
<protein>
    <recommendedName>
        <fullName>Survival of motor neuron-related-splicing factor 30</fullName>
    </recommendedName>
    <alternativeName>
        <fullName>30 kDa splicing factor SMNrp</fullName>
    </alternativeName>
    <alternativeName>
        <fullName>SMN-related protein</fullName>
    </alternativeName>
    <alternativeName>
        <fullName>Survival motor neuron domain-containing protein 1</fullName>
    </alternativeName>
</protein>
<keyword id="KW-0002">3D-structure</keyword>
<keyword id="KW-0007">Acetylation</keyword>
<keyword id="KW-0053">Apoptosis</keyword>
<keyword id="KW-0903">Direct protein sequencing</keyword>
<keyword id="KW-0507">mRNA processing</keyword>
<keyword id="KW-0508">mRNA splicing</keyword>
<keyword id="KW-0539">Nucleus</keyword>
<keyword id="KW-0597">Phosphoprotein</keyword>
<keyword id="KW-1267">Proteomics identification</keyword>
<keyword id="KW-1185">Reference proteome</keyword>
<keyword id="KW-0747">Spliceosome</keyword>
<feature type="chain" id="PRO_0000218908" description="Survival of motor neuron-related-splicing factor 30">
    <location>
        <begin position="1"/>
        <end position="238"/>
    </location>
</feature>
<feature type="domain" description="Tudor" evidence="2">
    <location>
        <begin position="72"/>
        <end position="132"/>
    </location>
</feature>
<feature type="short sequence motif" description="Nuclear localization signal" evidence="1">
    <location>
        <begin position="142"/>
        <end position="160"/>
    </location>
</feature>
<feature type="modified residue" description="Phosphoserine" evidence="10 11 13 14 15">
    <location>
        <position position="201"/>
    </location>
</feature>
<feature type="modified residue" description="N6-acetyllysine" evidence="12">
    <location>
        <position position="219"/>
    </location>
</feature>
<feature type="mutagenesis site" description="Increases binding to substrate containing dimethylated arginine." evidence="5">
    <original>FAGYGNAEVT</original>
    <variation>YAGYGNAEVQ</variation>
    <location>
        <begin position="108"/>
        <end position="117"/>
    </location>
</feature>
<feature type="sequence conflict" description="In Ref. 3; BAG36724." evidence="7" ref="3">
    <original>Q</original>
    <variation>R</variation>
    <location>
        <position position="174"/>
    </location>
</feature>
<feature type="strand" evidence="16">
    <location>
        <begin position="78"/>
        <end position="82"/>
    </location>
</feature>
<feature type="turn" evidence="16">
    <location>
        <begin position="84"/>
        <end position="86"/>
    </location>
</feature>
<feature type="strand" evidence="16">
    <location>
        <begin position="87"/>
        <end position="98"/>
    </location>
</feature>
<feature type="turn" evidence="16">
    <location>
        <begin position="99"/>
        <end position="102"/>
    </location>
</feature>
<feature type="strand" evidence="16">
    <location>
        <begin position="103"/>
        <end position="108"/>
    </location>
</feature>
<feature type="turn" evidence="16">
    <location>
        <begin position="109"/>
        <end position="112"/>
    </location>
</feature>
<feature type="strand" evidence="16">
    <location>
        <begin position="113"/>
        <end position="118"/>
    </location>
</feature>
<feature type="helix" evidence="16">
    <location>
        <begin position="119"/>
        <end position="121"/>
    </location>
</feature>
<comment type="function">
    <text evidence="3 4 6">Involved in spliceosome assembly.</text>
</comment>
<comment type="subunit">
    <text evidence="3 5">Associates with spliceosomes (PubMed:11331295). Associates with U4/U5/U6 tri-snRNP and with U2 snRNP (PubMed:11331295). Interacts (via Tudor domain) with SNRPD3 (via C-terminus); the interaction is direct (PubMed:22101937).</text>
</comment>
<comment type="interaction">
    <interactant intactId="EBI-1052641">
        <id>O75940</id>
    </interactant>
    <interactant intactId="EBI-286758">
        <id>Q14974</id>
        <label>KPNB1</label>
    </interactant>
    <organismsDiffer>false</organismsDiffer>
    <experiments>2</experiments>
</comment>
<comment type="interaction">
    <interactant intactId="EBI-1052641">
        <id>O75940</id>
    </interactant>
    <interactant intactId="EBI-744322">
        <id>O43395</id>
        <label>PRPF3</label>
    </interactant>
    <organismsDiffer>false</organismsDiffer>
    <experiments>3</experiments>
</comment>
<comment type="interaction">
    <interactant intactId="EBI-1052641">
        <id>O75940</id>
    </interactant>
    <interactant intactId="EBI-2462271">
        <id>Q15428</id>
        <label>SF3A2</label>
    </interactant>
    <organismsDiffer>false</organismsDiffer>
    <experiments>3</experiments>
</comment>
<comment type="subcellular location">
    <subcellularLocation>
        <location evidence="3 6">Nucleus speckle</location>
    </subcellularLocation>
    <subcellularLocation>
        <location evidence="3">Nucleus</location>
        <location evidence="3">Cajal body</location>
    </subcellularLocation>
    <text evidence="3">Detected in nuclear speckles containing snRNP and in Cajal (coiled) bodies.</text>
</comment>
<comment type="tissue specificity">
    <text evidence="6">Detected at intermediate levels in skeletal muscle, and at low levels in heart and pancreas.</text>
</comment>
<comment type="domain">
    <text evidence="5">The Tudor domain mediates association with dimethylarginines, which are common in snRNP proteins.</text>
</comment>
<comment type="similarity">
    <text evidence="7">Belongs to the SMN family.</text>
</comment>